<protein>
    <recommendedName>
        <fullName>F-box protein At4g09920</fullName>
    </recommendedName>
</protein>
<evidence type="ECO:0000305" key="1"/>
<dbReference type="EMBL" id="AL049481">
    <property type="protein sequence ID" value="CAB39616.1"/>
    <property type="status" value="ALT_SEQ"/>
    <property type="molecule type" value="Genomic_DNA"/>
</dbReference>
<dbReference type="EMBL" id="AL161516">
    <property type="protein sequence ID" value="CAB78115.1"/>
    <property type="status" value="ALT_SEQ"/>
    <property type="molecule type" value="Genomic_DNA"/>
</dbReference>
<dbReference type="EMBL" id="CP002687">
    <property type="protein sequence ID" value="AEE82812.1"/>
    <property type="molecule type" value="Genomic_DNA"/>
</dbReference>
<dbReference type="EMBL" id="CP002687">
    <property type="protein sequence ID" value="ANM67647.1"/>
    <property type="molecule type" value="Genomic_DNA"/>
</dbReference>
<dbReference type="PIR" id="T03996">
    <property type="entry name" value="T03996"/>
</dbReference>
<dbReference type="RefSeq" id="NP_001329465.1">
    <property type="nucleotide sequence ID" value="NM_001340642.1"/>
</dbReference>
<dbReference type="RefSeq" id="NP_192730.2">
    <property type="nucleotide sequence ID" value="NM_117060.3"/>
</dbReference>
<dbReference type="MetOSite" id="Q9T0F1"/>
<dbReference type="PaxDb" id="3702-AT4G09920.1"/>
<dbReference type="ProteomicsDB" id="222408"/>
<dbReference type="EnsemblPlants" id="AT4G09920.1">
    <property type="protein sequence ID" value="AT4G09920.1"/>
    <property type="gene ID" value="AT4G09920"/>
</dbReference>
<dbReference type="EnsemblPlants" id="AT4G09920.5">
    <property type="protein sequence ID" value="AT4G09920.5"/>
    <property type="gene ID" value="AT4G09920"/>
</dbReference>
<dbReference type="GeneID" id="826581"/>
<dbReference type="Gramene" id="AT4G09920.1">
    <property type="protein sequence ID" value="AT4G09920.1"/>
    <property type="gene ID" value="AT4G09920"/>
</dbReference>
<dbReference type="Gramene" id="AT4G09920.5">
    <property type="protein sequence ID" value="AT4G09920.5"/>
    <property type="gene ID" value="AT4G09920"/>
</dbReference>
<dbReference type="KEGG" id="ath:AT4G09920"/>
<dbReference type="Araport" id="AT4G09920"/>
<dbReference type="TAIR" id="AT4G09920"/>
<dbReference type="HOGENOM" id="CLU_010721_1_1_1"/>
<dbReference type="InParanoid" id="Q9T0F1"/>
<dbReference type="PRO" id="PR:Q9T0F1"/>
<dbReference type="Proteomes" id="UP000006548">
    <property type="component" value="Chromosome 4"/>
</dbReference>
<dbReference type="ExpressionAtlas" id="Q9T0F1">
    <property type="expression patterns" value="baseline and differential"/>
</dbReference>
<dbReference type="CDD" id="cd22160">
    <property type="entry name" value="F-box_AtFBL13-like"/>
    <property type="match status" value="1"/>
</dbReference>
<dbReference type="Gene3D" id="3.80.10.10">
    <property type="entry name" value="Ribonuclease Inhibitor"/>
    <property type="match status" value="1"/>
</dbReference>
<dbReference type="InterPro" id="IPR036047">
    <property type="entry name" value="F-box-like_dom_sf"/>
</dbReference>
<dbReference type="InterPro" id="IPR053781">
    <property type="entry name" value="F-box_AtFBL13-like"/>
</dbReference>
<dbReference type="InterPro" id="IPR001810">
    <property type="entry name" value="F-box_dom"/>
</dbReference>
<dbReference type="InterPro" id="IPR050232">
    <property type="entry name" value="FBL13/AtMIF1-like"/>
</dbReference>
<dbReference type="InterPro" id="IPR032675">
    <property type="entry name" value="LRR_dom_sf"/>
</dbReference>
<dbReference type="InterPro" id="IPR055411">
    <property type="entry name" value="LRR_FXL15/At3g58940/PEG3-like"/>
</dbReference>
<dbReference type="PANTHER" id="PTHR31900">
    <property type="entry name" value="F-BOX/RNI SUPERFAMILY PROTEIN-RELATED"/>
    <property type="match status" value="1"/>
</dbReference>
<dbReference type="PANTHER" id="PTHR31900:SF28">
    <property type="entry name" value="FBD DOMAIN-CONTAINING PROTEIN"/>
    <property type="match status" value="1"/>
</dbReference>
<dbReference type="Pfam" id="PF00646">
    <property type="entry name" value="F-box"/>
    <property type="match status" value="1"/>
</dbReference>
<dbReference type="Pfam" id="PF24758">
    <property type="entry name" value="LRR_At5g56370"/>
    <property type="match status" value="1"/>
</dbReference>
<dbReference type="SUPFAM" id="SSF81383">
    <property type="entry name" value="F-box domain"/>
    <property type="match status" value="1"/>
</dbReference>
<dbReference type="SUPFAM" id="SSF52047">
    <property type="entry name" value="RNI-like"/>
    <property type="match status" value="1"/>
</dbReference>
<gene>
    <name type="ordered locus">At4g09920</name>
    <name type="ORF">T5L19.50</name>
</gene>
<accession>Q9T0F1</accession>
<accession>F4JKU5</accession>
<proteinExistence type="predicted"/>
<sequence>MDRIIGLPDEVLVKILSFVPTKVAVSTSILSKRWEFLWMWLTKLKFGSKRYSESEFKRLQCFLDRNLPLHRAPVIESFRLVLSDSHFKPEDIRMWVVVAVSRYIRELKIYSSHYGEKQNILPSSLYTCKSLVILKLDGGVLLDVPRMVCLPSLKTLELKGVRYFKQGSLQRLLCNCPVLEDLFVLLLRCDDIGMFIVIVPSLQRLSLYLSPRCNLEGFVIVLDTPLEYFKLVDRNYDRHPYMIENMPKLTSAYVEVISADLKSLVESITSVKYLTIFSENYDDFVFPWNQPSTVPKCFCPVYKSSPVYKSSPGQNT</sequence>
<reference key="1">
    <citation type="journal article" date="1999" name="Nature">
        <title>Sequence and analysis of chromosome 4 of the plant Arabidopsis thaliana.</title>
        <authorList>
            <person name="Mayer K.F.X."/>
            <person name="Schueller C."/>
            <person name="Wambutt R."/>
            <person name="Murphy G."/>
            <person name="Volckaert G."/>
            <person name="Pohl T."/>
            <person name="Duesterhoeft A."/>
            <person name="Stiekema W."/>
            <person name="Entian K.-D."/>
            <person name="Terryn N."/>
            <person name="Harris B."/>
            <person name="Ansorge W."/>
            <person name="Brandt P."/>
            <person name="Grivell L.A."/>
            <person name="Rieger M."/>
            <person name="Weichselgartner M."/>
            <person name="de Simone V."/>
            <person name="Obermaier B."/>
            <person name="Mache R."/>
            <person name="Mueller M."/>
            <person name="Kreis M."/>
            <person name="Delseny M."/>
            <person name="Puigdomenech P."/>
            <person name="Watson M."/>
            <person name="Schmidtheini T."/>
            <person name="Reichert B."/>
            <person name="Portetelle D."/>
            <person name="Perez-Alonso M."/>
            <person name="Boutry M."/>
            <person name="Bancroft I."/>
            <person name="Vos P."/>
            <person name="Hoheisel J."/>
            <person name="Zimmermann W."/>
            <person name="Wedler H."/>
            <person name="Ridley P."/>
            <person name="Langham S.-A."/>
            <person name="McCullagh B."/>
            <person name="Bilham L."/>
            <person name="Robben J."/>
            <person name="van der Schueren J."/>
            <person name="Grymonprez B."/>
            <person name="Chuang Y.-J."/>
            <person name="Vandenbussche F."/>
            <person name="Braeken M."/>
            <person name="Weltjens I."/>
            <person name="Voet M."/>
            <person name="Bastiaens I."/>
            <person name="Aert R."/>
            <person name="Defoor E."/>
            <person name="Weitzenegger T."/>
            <person name="Bothe G."/>
            <person name="Ramsperger U."/>
            <person name="Hilbert H."/>
            <person name="Braun M."/>
            <person name="Holzer E."/>
            <person name="Brandt A."/>
            <person name="Peters S."/>
            <person name="van Staveren M."/>
            <person name="Dirkse W."/>
            <person name="Mooijman P."/>
            <person name="Klein Lankhorst R."/>
            <person name="Rose M."/>
            <person name="Hauf J."/>
            <person name="Koetter P."/>
            <person name="Berneiser S."/>
            <person name="Hempel S."/>
            <person name="Feldpausch M."/>
            <person name="Lamberth S."/>
            <person name="Van den Daele H."/>
            <person name="De Keyser A."/>
            <person name="Buysshaert C."/>
            <person name="Gielen J."/>
            <person name="Villarroel R."/>
            <person name="De Clercq R."/>
            <person name="van Montagu M."/>
            <person name="Rogers J."/>
            <person name="Cronin A."/>
            <person name="Quail M.A."/>
            <person name="Bray-Allen S."/>
            <person name="Clark L."/>
            <person name="Doggett J."/>
            <person name="Hall S."/>
            <person name="Kay M."/>
            <person name="Lennard N."/>
            <person name="McLay K."/>
            <person name="Mayes R."/>
            <person name="Pettett A."/>
            <person name="Rajandream M.A."/>
            <person name="Lyne M."/>
            <person name="Benes V."/>
            <person name="Rechmann S."/>
            <person name="Borkova D."/>
            <person name="Bloecker H."/>
            <person name="Scharfe M."/>
            <person name="Grimm M."/>
            <person name="Loehnert T.-H."/>
            <person name="Dose S."/>
            <person name="de Haan M."/>
            <person name="Maarse A.C."/>
            <person name="Schaefer M."/>
            <person name="Mueller-Auer S."/>
            <person name="Gabel C."/>
            <person name="Fuchs M."/>
            <person name="Fartmann B."/>
            <person name="Granderath K."/>
            <person name="Dauner D."/>
            <person name="Herzl A."/>
            <person name="Neumann S."/>
            <person name="Argiriou A."/>
            <person name="Vitale D."/>
            <person name="Liguori R."/>
            <person name="Piravandi E."/>
            <person name="Massenet O."/>
            <person name="Quigley F."/>
            <person name="Clabauld G."/>
            <person name="Muendlein A."/>
            <person name="Felber R."/>
            <person name="Schnabl S."/>
            <person name="Hiller R."/>
            <person name="Schmidt W."/>
            <person name="Lecharny A."/>
            <person name="Aubourg S."/>
            <person name="Chefdor F."/>
            <person name="Cooke R."/>
            <person name="Berger C."/>
            <person name="Monfort A."/>
            <person name="Casacuberta E."/>
            <person name="Gibbons T."/>
            <person name="Weber N."/>
            <person name="Vandenbol M."/>
            <person name="Bargues M."/>
            <person name="Terol J."/>
            <person name="Torres A."/>
            <person name="Perez-Perez A."/>
            <person name="Purnelle B."/>
            <person name="Bent E."/>
            <person name="Johnson S."/>
            <person name="Tacon D."/>
            <person name="Jesse T."/>
            <person name="Heijnen L."/>
            <person name="Schwarz S."/>
            <person name="Scholler P."/>
            <person name="Heber S."/>
            <person name="Francs P."/>
            <person name="Bielke C."/>
            <person name="Frishman D."/>
            <person name="Haase D."/>
            <person name="Lemcke K."/>
            <person name="Mewes H.-W."/>
            <person name="Stocker S."/>
            <person name="Zaccaria P."/>
            <person name="Bevan M."/>
            <person name="Wilson R.K."/>
            <person name="de la Bastide M."/>
            <person name="Habermann K."/>
            <person name="Parnell L."/>
            <person name="Dedhia N."/>
            <person name="Gnoj L."/>
            <person name="Schutz K."/>
            <person name="Huang E."/>
            <person name="Spiegel L."/>
            <person name="Sekhon M."/>
            <person name="Murray J."/>
            <person name="Sheet P."/>
            <person name="Cordes M."/>
            <person name="Abu-Threideh J."/>
            <person name="Stoneking T."/>
            <person name="Kalicki J."/>
            <person name="Graves T."/>
            <person name="Harmon G."/>
            <person name="Edwards J."/>
            <person name="Latreille P."/>
            <person name="Courtney L."/>
            <person name="Cloud J."/>
            <person name="Abbott A."/>
            <person name="Scott K."/>
            <person name="Johnson D."/>
            <person name="Minx P."/>
            <person name="Bentley D."/>
            <person name="Fulton B."/>
            <person name="Miller N."/>
            <person name="Greco T."/>
            <person name="Kemp K."/>
            <person name="Kramer J."/>
            <person name="Fulton L."/>
            <person name="Mardis E."/>
            <person name="Dante M."/>
            <person name="Pepin K."/>
            <person name="Hillier L.W."/>
            <person name="Nelson J."/>
            <person name="Spieth J."/>
            <person name="Ryan E."/>
            <person name="Andrews S."/>
            <person name="Geisel C."/>
            <person name="Layman D."/>
            <person name="Du H."/>
            <person name="Ali J."/>
            <person name="Berghoff A."/>
            <person name="Jones K."/>
            <person name="Drone K."/>
            <person name="Cotton M."/>
            <person name="Joshu C."/>
            <person name="Antonoiu B."/>
            <person name="Zidanic M."/>
            <person name="Strong C."/>
            <person name="Sun H."/>
            <person name="Lamar B."/>
            <person name="Yordan C."/>
            <person name="Ma P."/>
            <person name="Zhong J."/>
            <person name="Preston R."/>
            <person name="Vil D."/>
            <person name="Shekher M."/>
            <person name="Matero A."/>
            <person name="Shah R."/>
            <person name="Swaby I.K."/>
            <person name="O'Shaughnessy A."/>
            <person name="Rodriguez M."/>
            <person name="Hoffman J."/>
            <person name="Till S."/>
            <person name="Granat S."/>
            <person name="Shohdy N."/>
            <person name="Hasegawa A."/>
            <person name="Hameed A."/>
            <person name="Lodhi M."/>
            <person name="Johnson A."/>
            <person name="Chen E."/>
            <person name="Marra M.A."/>
            <person name="Martienssen R."/>
            <person name="McCombie W.R."/>
        </authorList>
    </citation>
    <scope>NUCLEOTIDE SEQUENCE [LARGE SCALE GENOMIC DNA]</scope>
    <source>
        <strain>cv. Columbia</strain>
    </source>
</reference>
<reference key="2">
    <citation type="journal article" date="2017" name="Plant J.">
        <title>Araport11: a complete reannotation of the Arabidopsis thaliana reference genome.</title>
        <authorList>
            <person name="Cheng C.Y."/>
            <person name="Krishnakumar V."/>
            <person name="Chan A.P."/>
            <person name="Thibaud-Nissen F."/>
            <person name="Schobel S."/>
            <person name="Town C.D."/>
        </authorList>
    </citation>
    <scope>GENOME REANNOTATION</scope>
    <source>
        <strain>cv. Columbia</strain>
    </source>
</reference>
<keyword id="KW-1185">Reference proteome</keyword>
<feature type="chain" id="PRO_0000283495" description="F-box protein At4g09920">
    <location>
        <begin position="1"/>
        <end position="316"/>
    </location>
</feature>
<feature type="domain" description="F-box">
    <location>
        <begin position="1"/>
        <end position="47"/>
    </location>
</feature>
<comment type="sequence caution" evidence="1">
    <conflict type="erroneous gene model prediction">
        <sequence resource="EMBL-CDS" id="CAB39616"/>
    </conflict>
</comment>
<comment type="sequence caution" evidence="1">
    <conflict type="erroneous gene model prediction">
        <sequence resource="EMBL-CDS" id="CAB78115"/>
    </conflict>
</comment>
<organism>
    <name type="scientific">Arabidopsis thaliana</name>
    <name type="common">Mouse-ear cress</name>
    <dbReference type="NCBI Taxonomy" id="3702"/>
    <lineage>
        <taxon>Eukaryota</taxon>
        <taxon>Viridiplantae</taxon>
        <taxon>Streptophyta</taxon>
        <taxon>Embryophyta</taxon>
        <taxon>Tracheophyta</taxon>
        <taxon>Spermatophyta</taxon>
        <taxon>Magnoliopsida</taxon>
        <taxon>eudicotyledons</taxon>
        <taxon>Gunneridae</taxon>
        <taxon>Pentapetalae</taxon>
        <taxon>rosids</taxon>
        <taxon>malvids</taxon>
        <taxon>Brassicales</taxon>
        <taxon>Brassicaceae</taxon>
        <taxon>Camelineae</taxon>
        <taxon>Arabidopsis</taxon>
    </lineage>
</organism>
<name>FB226_ARATH</name>